<proteinExistence type="evidence at protein level"/>
<sequence>DDTPSSRCGSGGWGPCLPIVDLLCIVHVTVGCSGGFGCCRIG</sequence>
<reference evidence="3" key="1">
    <citation type="journal article" date="2005" name="Biomacromolecules">
        <title>Purification and characterization of a vaterite-inducing peptide, pelovaterin, from the eggshells of Pelodiscus sinensis (Chinese soft-shelled turtle).</title>
        <authorList>
            <person name="Lakshminarayanan R."/>
            <person name="Chi-Jin E.O."/>
            <person name="Loh X.J."/>
            <person name="Kini R.M."/>
            <person name="Valiyaveettil S."/>
        </authorList>
    </citation>
    <scope>PROTEIN SEQUENCE</scope>
    <scope>FUNCTION</scope>
    <scope>MASS SPECTROMETRY</scope>
    <source>
        <tissue evidence="1">Eggshell matrix</tissue>
    </source>
</reference>
<reference key="2">
    <citation type="journal article" date="2008" name="J. Am. Chem. Soc.">
        <title>Structure, self-assembly, and dual role of a beta-defensin-like peptide from the Chinese soft-shelled turtle eggshell matrix.</title>
        <authorList>
            <person name="Lakshminarayanan R."/>
            <person name="Vivekanandan S."/>
            <person name="Samy R.P."/>
            <person name="Banerjee Y."/>
            <person name="Chi-Jin E.O."/>
            <person name="Teo K.W."/>
            <person name="Jois S.D."/>
            <person name="Kini R.M."/>
            <person name="Valiyaveettil S."/>
        </authorList>
    </citation>
    <scope>STRUCTURE BY NMR</scope>
    <scope>FUNCTION</scope>
    <scope>SUBCELLULAR LOCATION</scope>
    <scope>DISULFIDE BONDS</scope>
</reference>
<comment type="function">
    <text evidence="1 2">Induces the nucleation and stabilization of vaterite, one of the crystalline polymorphs of calcium carbonate. Exhibits strong antimicrobial activity against Pseudomonas aeruginosa and Proteus vulgaris.</text>
</comment>
<comment type="subcellular location">
    <subcellularLocation>
        <location evidence="2">Secreted</location>
        <location evidence="2">Extracellular space</location>
        <location evidence="2">Extracellular matrix</location>
    </subcellularLocation>
</comment>
<comment type="mass spectrometry"/>
<accession>P84818</accession>
<name>PVAT_PELSI</name>
<keyword id="KW-0002">3D-structure</keyword>
<keyword id="KW-0044">Antibiotic</keyword>
<keyword id="KW-0929">Antimicrobial</keyword>
<keyword id="KW-0091">Biomineralization</keyword>
<keyword id="KW-0903">Direct protein sequencing</keyword>
<keyword id="KW-1015">Disulfide bond</keyword>
<keyword id="KW-0272">Extracellular matrix</keyword>
<keyword id="KW-1185">Reference proteome</keyword>
<keyword id="KW-0964">Secreted</keyword>
<protein>
    <recommendedName>
        <fullName>Pelovaterin</fullName>
    </recommendedName>
</protein>
<feature type="chain" id="PRO_0000233908" description="Pelovaterin">
    <location>
        <begin position="1"/>
        <end position="42"/>
    </location>
</feature>
<feature type="disulfide bond" evidence="2">
    <location>
        <begin position="8"/>
        <end position="38"/>
    </location>
</feature>
<feature type="disulfide bond" evidence="2">
    <location>
        <begin position="16"/>
        <end position="32"/>
    </location>
</feature>
<feature type="disulfide bond" evidence="2">
    <location>
        <begin position="24"/>
        <end position="39"/>
    </location>
</feature>
<feature type="turn" evidence="4">
    <location>
        <begin position="8"/>
        <end position="10"/>
    </location>
</feature>
<feature type="strand" evidence="4">
    <location>
        <begin position="11"/>
        <end position="13"/>
    </location>
</feature>
<feature type="helix" evidence="4">
    <location>
        <begin position="19"/>
        <end position="21"/>
    </location>
</feature>
<feature type="strand" evidence="4">
    <location>
        <begin position="30"/>
        <end position="32"/>
    </location>
</feature>
<feature type="strand" evidence="4">
    <location>
        <begin position="36"/>
        <end position="38"/>
    </location>
</feature>
<evidence type="ECO:0000269" key="1">
    <source>
    </source>
</evidence>
<evidence type="ECO:0000269" key="2">
    <source>
    </source>
</evidence>
<evidence type="ECO:0000305" key="3"/>
<evidence type="ECO:0007829" key="4">
    <source>
        <dbReference type="PDB" id="2JR3"/>
    </source>
</evidence>
<dbReference type="PDB" id="2JR3">
    <property type="method" value="NMR"/>
    <property type="chains" value="A=1-42"/>
</dbReference>
<dbReference type="PDBsum" id="2JR3"/>
<dbReference type="BMRB" id="P84818"/>
<dbReference type="SMR" id="P84818"/>
<dbReference type="EvolutionaryTrace" id="P84818"/>
<dbReference type="Proteomes" id="UP000007267">
    <property type="component" value="Unassembled WGS sequence"/>
</dbReference>
<dbReference type="GO" id="GO:0005576">
    <property type="term" value="C:extracellular region"/>
    <property type="evidence" value="ECO:0007669"/>
    <property type="project" value="UniProtKB-KW"/>
</dbReference>
<dbReference type="GO" id="GO:0031214">
    <property type="term" value="P:biomineral tissue development"/>
    <property type="evidence" value="ECO:0007669"/>
    <property type="project" value="UniProtKB-KW"/>
</dbReference>
<dbReference type="GO" id="GO:0042742">
    <property type="term" value="P:defense response to bacterium"/>
    <property type="evidence" value="ECO:0007669"/>
    <property type="project" value="UniProtKB-KW"/>
</dbReference>
<dbReference type="Gene3D" id="2.20.20.60">
    <property type="match status" value="1"/>
</dbReference>
<dbReference type="InterPro" id="IPR041579">
    <property type="entry name" value="Pelovaterin"/>
</dbReference>
<dbReference type="InterPro" id="IPR053766">
    <property type="entry name" value="Vaterite_Nuc_Antimicrob_sf"/>
</dbReference>
<dbReference type="Pfam" id="PF17859">
    <property type="entry name" value="Pelovaterin"/>
    <property type="match status" value="1"/>
</dbReference>
<organism>
    <name type="scientific">Pelodiscus sinensis</name>
    <name type="common">Chinese softshell turtle</name>
    <name type="synonym">Trionyx sinensis</name>
    <dbReference type="NCBI Taxonomy" id="13735"/>
    <lineage>
        <taxon>Eukaryota</taxon>
        <taxon>Metazoa</taxon>
        <taxon>Chordata</taxon>
        <taxon>Craniata</taxon>
        <taxon>Vertebrata</taxon>
        <taxon>Euteleostomi</taxon>
        <taxon>Archelosauria</taxon>
        <taxon>Testudinata</taxon>
        <taxon>Testudines</taxon>
        <taxon>Cryptodira</taxon>
        <taxon>Trionychia</taxon>
        <taxon>Trionychidae</taxon>
        <taxon>Pelodiscus</taxon>
    </lineage>
</organism>